<organism>
    <name type="scientific">Patiria pectinifera</name>
    <name type="common">Starfish</name>
    <name type="synonym">Asterina pectinifera</name>
    <dbReference type="NCBI Taxonomy" id="7594"/>
    <lineage>
        <taxon>Eukaryota</taxon>
        <taxon>Metazoa</taxon>
        <taxon>Echinodermata</taxon>
        <taxon>Eleutherozoa</taxon>
        <taxon>Asterozoa</taxon>
        <taxon>Asteroidea</taxon>
        <taxon>Valvatacea</taxon>
        <taxon>Valvatida</taxon>
        <taxon>Asterinidae</taxon>
        <taxon>Patiria</taxon>
    </lineage>
</organism>
<sequence length="2698" mass="307591">MSEMSASFLHFGDIVSLYAEGSVNGFISTLGLVDDRCVVQPDFGDLNNPPKKFRDCLFKICPMNRYTAQKQFWKSAKPNVSSATDAVLLKKLQHAAEMEKKQNETENKKLMGSVIVYGNVIQLLHIKSHKYMTVNKRLPALLEKNAMRVTLDSSATEGSWFYIVPFYKLRSAGDNVVVGDKVVLNPVNAGQPLHPSNYELIDNPGCKEVNSVNCNTCWKVSLFMEHKENLDGLKGGDVVRLFHAEQEKFLTCDEYKKKSYIFLRTTGRVSATAATSSKALWETEVVQHDPCRGGAGHWNSLFRFKHLATGQYMAAEVDNDNTKDHTREKLRGPHGGTVYQMVPIIHGNDIASIFELDPTTLQGGDSMVPRSSYVRLRHLCTNTWVHSTSIPLDKGEDKPVMLKVGTAQIREDREAFAIIPVSPTEVRDLDFANDANKVLSAIASKLEKSSITQNERFVTQLLTDLVYFVSILPNNGGDALNVVVQNPDRDRQKLMREQDILKQIFKILKAPFTDNGDGAMLKMEELADPRHAPYRHICRLCYRILRLSQQAYRKNQEYIAKQFGFMQKQIGYDVLAEDTITALLHNNRKLLEKHITATEIETFVNLVRKNGECRFLEYLSDLCVSNNQAIPVTQELICKSVLVERNSDILIETKLVRTQMEVEMEVEADDGTTEPVYTIEEEEEVVLFWKNGTKSKSIRSCHGGTENVKEDANVLKYYRYQLDLFSQMCLDRQYLAINQIGPQLDIDLIHRCMSDESLPYDLRASFTRLMLHMHVDRDPKEQVTPVKYAELWSEIPTQITIDDYDGANNLTHAGKEDAQPKFSLTIKFVEEYLCNVVSGVLVVYDKEQNKLTFEVVNLAKHLIYFGFYSFSELLRLTKTLLSILDCTALHGTAPGKLDPKADIGKGGVFRSIHGVGAVMTNMVLGKRLPTPVTRDPAWPLGWGLDNHNKQDELVMETKLKIIQILQFILNVRLDYRISCLLSIFKRDFDESKDSTDEITTSGKVWTASDFEHIEEQAEGIFGGSEENTPLDLDDDDGGRTFLRVLIHLTMHDYAPLVSGALQLLFKHFSQRQEVLEAFKQLQLLVSSQDVDNYKQIKQDLDQLRLVEKSELWVYKGQGPDEPMDGASGEQEHKKTEEGTSKPLKHESTSSYNYRVVKEILLRLSKLVCVEGNGTRKNRKHEQRLLRNMGAFTVVLELLQIPYEKNHDTRMNELMRLAHEFLQNFCWANPSNQVLLHKHIDLFLTPGLLEAQTMCHIFMNNFQLCSEVTEQVVQHFVHCIATHGRHVQYLKFLQAIVKADGQYIRKTQDMVMAELVNAGEDVLLFYNDKASFQMFINMMRTERERMDASSPSQYRHQPWTLLGLACTEGKNVYTEIKCHSLLPLDDIVRVATHEDCLPEVKNAYINFLNHCYVDTEVEMKEIYTSNHVWNLFENFLVDMAMVCNATHDRKHHDHMLEKTVTETVMNIITMFFSSPFADQSTTVQTRQPVFVRLLQGAFRVSQCDWLTGHQKYHVENCIKTLTDIAKNRGIAIPVDLDSQVNTLFSKSIVMKHTRHWLAINPNRSRDSMVAISRDYRSIIEGLQDIVSLLEDQLRPLVQAELSVLVDVLHRPELLFPFRHRARQKCESGAFISKLIKHTEKLLEEKEEKLCIKVLQTLKEMMTVDIDYSEKGEDLRQCLLLRYYGKSHLRMKHRGVVASGRGQTNVTSCGPGSRVLSRAEMTLAEVQCQLDKEGASSLVIDLVIKNSSNRVFLESVELGIALLEGGNTNIQKSIINCLMSDKNSEKFFKVFFDRMREASEIKATVTVNTGEGIGQTKPTEGRNGQHLRRRLTWPHEKGWTRPQRLNQRRAEDQLLADAALHTSKASRQSARVATTTLLASCQVLAGGAEKAKEEEKMSMEIAIMQPILRFLQLLCENHNRELQSYLRHQNNKTNYNLVCETLQFLDCICGSTTGGLGLLGLYINENNVALINQTLESLTEYCQGACHENQNAIANHESNGLDIITALILNDINPLGKNRMDLVLELKNNASKLLLAIMESRHDSENAERILLNMSPKQLVDVIKQAYQQEDLERDDDDELIIEEDDEAISPREVGHNIYILAHQLAHHNKELAALLKPTGPNSEYTDRALEYYFKHTAQIEIVRQDRTMEQIVFPVPQLCEYLTAETKIKVFTKAERDDQGSKVADFFEKTEDMFMEMKWQKKLRAQPILFLASSNMSKWSLVCFNLAVIVNLLVAFFYPFDVTTTELDHGLSMLVWLMAASLAAIVTLRRPSGIRPLVFATILRMLIFSIGVEPTLLFLAVLTIFNKCIFILSFLGNCGLLYKGVRGIFTDMEVLYHILYLIICFLGLFVHEFFYSLLLLDVVYQEDTLINVIHSVTRNWRSIAFTALLALILVYLFSIVGYLFLQDDFVYEVNPLRPAIATATATNKTGTSPPMPLPPESCPAGLEMEDCLKNNLSHVQAKEVSYDSGIEVGTERERACETLIMYIITTLNFGVRSGGGIGDVLRSPSTREPLYMARVIYDLLFFIVVIIIVLNLIFGVIIDTFADLRSEKQQKEEILKNTCFICGLNRSSFDNKSVSFEEHYKEEHSMWHYLYFIVLVKVKDPTEFTGPESYVYNMTKEKNQDWFPRMRAMSLDSDEGESEQNEMRILQNQLENTNSLVKVLSGQLRELKDQMTEQRKQKQRINLLSSPSIPQMGGP</sequence>
<proteinExistence type="evidence at protein level"/>
<name>ITPR_PATPE</name>
<dbReference type="EMBL" id="AB071372">
    <property type="protein sequence ID" value="BAB84088.1"/>
    <property type="molecule type" value="mRNA"/>
</dbReference>
<dbReference type="SMR" id="Q8WSR4"/>
<dbReference type="GO" id="GO:0005789">
    <property type="term" value="C:endoplasmic reticulum membrane"/>
    <property type="evidence" value="ECO:0007669"/>
    <property type="project" value="UniProtKB-SubCell"/>
</dbReference>
<dbReference type="GO" id="GO:0070679">
    <property type="term" value="F:inositol 1,4,5 trisphosphate binding"/>
    <property type="evidence" value="ECO:0007669"/>
    <property type="project" value="InterPro"/>
</dbReference>
<dbReference type="GO" id="GO:0005220">
    <property type="term" value="F:inositol 1,4,5-trisphosphate-gated calcium channel activity"/>
    <property type="evidence" value="ECO:0007669"/>
    <property type="project" value="InterPro"/>
</dbReference>
<dbReference type="GO" id="GO:0007338">
    <property type="term" value="P:single fertilization"/>
    <property type="evidence" value="ECO:0007669"/>
    <property type="project" value="UniProtKB-KW"/>
</dbReference>
<dbReference type="CDD" id="cd23277">
    <property type="entry name" value="beta-trefoil_MIR_ITPR"/>
    <property type="match status" value="1"/>
</dbReference>
<dbReference type="FunFam" id="2.80.10.50:FF:000002">
    <property type="entry name" value="Inositol 1,4,5-trisphosphate receptor type 2"/>
    <property type="match status" value="1"/>
</dbReference>
<dbReference type="FunFam" id="2.80.10.50:FF:000005">
    <property type="entry name" value="Inositol 1,4,5-trisphosphate receptor type 2"/>
    <property type="match status" value="1"/>
</dbReference>
<dbReference type="FunFam" id="1.25.10.30:FF:000001">
    <property type="entry name" value="Inositol 1,4,5-trisphosphate receptor, type 2"/>
    <property type="match status" value="1"/>
</dbReference>
<dbReference type="Gene3D" id="1.10.287.70">
    <property type="match status" value="1"/>
</dbReference>
<dbReference type="Gene3D" id="2.80.10.50">
    <property type="match status" value="2"/>
</dbReference>
<dbReference type="Gene3D" id="1.25.10.30">
    <property type="entry name" value="IP3 receptor type 1 binding core, RIH domain"/>
    <property type="match status" value="1"/>
</dbReference>
<dbReference type="InterPro" id="IPR016024">
    <property type="entry name" value="ARM-type_fold"/>
</dbReference>
<dbReference type="InterPro" id="IPR014821">
    <property type="entry name" value="Ins145_P3_rcpt"/>
</dbReference>
<dbReference type="InterPro" id="IPR000493">
    <property type="entry name" value="InsP3_rcpt"/>
</dbReference>
<dbReference type="InterPro" id="IPR005821">
    <property type="entry name" value="Ion_trans_dom"/>
</dbReference>
<dbReference type="InterPro" id="IPR036300">
    <property type="entry name" value="MIR_dom_sf"/>
</dbReference>
<dbReference type="InterPro" id="IPR016093">
    <property type="entry name" value="MIR_motif"/>
</dbReference>
<dbReference type="InterPro" id="IPR013662">
    <property type="entry name" value="RIH_assoc-dom"/>
</dbReference>
<dbReference type="InterPro" id="IPR000699">
    <property type="entry name" value="RIH_dom"/>
</dbReference>
<dbReference type="InterPro" id="IPR015925">
    <property type="entry name" value="Ryanodine_IP3_receptor"/>
</dbReference>
<dbReference type="InterPro" id="IPR035910">
    <property type="entry name" value="RyR/IP3R_RIH_dom_sf"/>
</dbReference>
<dbReference type="PANTHER" id="PTHR45816">
    <property type="entry name" value="MIR DOMAIN-CONTAINING PROTEIN"/>
    <property type="match status" value="1"/>
</dbReference>
<dbReference type="PANTHER" id="PTHR45816:SF4">
    <property type="entry name" value="RYR_IP3R HOMOLOGY ASSOCIATED DOMAIN-CONTAINING PROTEIN"/>
    <property type="match status" value="1"/>
</dbReference>
<dbReference type="Pfam" id="PF08709">
    <property type="entry name" value="Ins145_P3_rec"/>
    <property type="match status" value="1"/>
</dbReference>
<dbReference type="Pfam" id="PF00520">
    <property type="entry name" value="Ion_trans"/>
    <property type="match status" value="1"/>
</dbReference>
<dbReference type="Pfam" id="PF02815">
    <property type="entry name" value="MIR"/>
    <property type="match status" value="1"/>
</dbReference>
<dbReference type="Pfam" id="PF08454">
    <property type="entry name" value="RIH_assoc"/>
    <property type="match status" value="1"/>
</dbReference>
<dbReference type="Pfam" id="PF01365">
    <property type="entry name" value="RYDR_ITPR"/>
    <property type="match status" value="2"/>
</dbReference>
<dbReference type="PRINTS" id="PR00779">
    <property type="entry name" value="INSP3RECEPTR"/>
</dbReference>
<dbReference type="SMART" id="SM00472">
    <property type="entry name" value="MIR"/>
    <property type="match status" value="4"/>
</dbReference>
<dbReference type="SUPFAM" id="SSF48371">
    <property type="entry name" value="ARM repeat"/>
    <property type="match status" value="1"/>
</dbReference>
<dbReference type="SUPFAM" id="SSF100909">
    <property type="entry name" value="IP3 receptor type 1 binding core, domain 2"/>
    <property type="match status" value="2"/>
</dbReference>
<dbReference type="SUPFAM" id="SSF82109">
    <property type="entry name" value="MIR domain"/>
    <property type="match status" value="2"/>
</dbReference>
<dbReference type="PROSITE" id="PS50919">
    <property type="entry name" value="MIR"/>
    <property type="match status" value="5"/>
</dbReference>
<reference evidence="9 10" key="1">
    <citation type="journal article" date="2002" name="J. Biol. Chem.">
        <title>Molecular characterization of the starfish inositol 1,4,5-trisphosphate receptor and its role during oocyte maturation and fertilization.</title>
        <authorList>
            <person name="Iwasaki H."/>
            <person name="Chiba K."/>
            <person name="Uchiyama T."/>
            <person name="Yoshikawa F."/>
            <person name="Suzuki F."/>
            <person name="Ikeda M."/>
            <person name="Furuichi T."/>
            <person name="Mikoshiba K."/>
        </authorList>
    </citation>
    <scope>NUCLEOTIDE SEQUENCE [MRNA]</scope>
    <scope>FUNCTION</scope>
    <scope>SUBCELLULAR LOCATION</scope>
    <scope>DEVELOPMENTAL STAGE</scope>
    <source>
        <tissue evidence="7">Ovary</tissue>
    </source>
</reference>
<protein>
    <recommendedName>
        <fullName evidence="10">Inositol 1,4,5-trisphosphate receptor</fullName>
        <shortName evidence="10">ApIP3R</shortName>
    </recommendedName>
</protein>
<comment type="function">
    <text evidence="3 7">Receptor for inositol 1,4,5-trisphosphate, a second messenger that mediates the release of intracellular calcium (By similarity). Involved in the induction of intracellular calcium increase in eggs during fertilization and in the formation of the fertilization envelope during oocyte maturation.</text>
</comment>
<comment type="subcellular location">
    <subcellularLocation>
        <location evidence="7">Cytoplasm</location>
    </subcellularLocation>
    <subcellularLocation>
        <location evidence="2">Endoplasmic reticulum membrane</location>
        <topology evidence="2">Multi-pass membrane protein</topology>
    </subcellularLocation>
    <text evidence="2 7">In immature oocytes, distributed throughout the cytoplasm but not in the germinal vesicle (GV). During GV disintegration, expression is concentrated at the site where the GV was previously located. Following GV breakdown, expressed evenly throughout the egg cytoplasm.</text>
</comment>
<comment type="developmental stage">
    <text evidence="7">Expressed during oocyte maturation with levels remaining constant throughout this period (at protein level).</text>
</comment>
<comment type="domain">
    <text evidence="2">The receptor contains a calcium channel in its C-terminal extremity. Its large N-terminal cytoplasmic region has the ligand-binding site in the N-terminus and modulatory sites in the middle portion immediately upstream of the channel region.</text>
</comment>
<comment type="similarity">
    <text evidence="4">Belongs to the InsP3 receptor family.</text>
</comment>
<gene>
    <name evidence="8" type="primary">IP3R</name>
</gene>
<evidence type="ECO:0000250" key="1"/>
<evidence type="ECO:0000250" key="2">
    <source>
        <dbReference type="UniProtKB" id="P11881"/>
    </source>
</evidence>
<evidence type="ECO:0000250" key="3">
    <source>
        <dbReference type="UniProtKB" id="Q9Z329"/>
    </source>
</evidence>
<evidence type="ECO:0000255" key="4"/>
<evidence type="ECO:0000255" key="5">
    <source>
        <dbReference type="PROSITE-ProRule" id="PRU00131"/>
    </source>
</evidence>
<evidence type="ECO:0000256" key="6">
    <source>
        <dbReference type="SAM" id="MobiDB-lite"/>
    </source>
</evidence>
<evidence type="ECO:0000269" key="7">
    <source>
    </source>
</evidence>
<evidence type="ECO:0000303" key="8">
    <source>
    </source>
</evidence>
<evidence type="ECO:0000305" key="9"/>
<evidence type="ECO:0000312" key="10">
    <source>
        <dbReference type="EMBL" id="BAB84088.1"/>
    </source>
</evidence>
<accession>Q8WSR4</accession>
<feature type="chain" id="PRO_0000415412" description="Inositol 1,4,5-trisphosphate receptor">
    <location>
        <begin position="1"/>
        <end position="2698"/>
    </location>
</feature>
<feature type="topological domain" description="Cytoplasmic" evidence="4">
    <location>
        <begin position="1"/>
        <end position="2218"/>
    </location>
</feature>
<feature type="transmembrane region" description="Helical" evidence="4">
    <location>
        <begin position="2219"/>
        <end position="2239"/>
    </location>
</feature>
<feature type="topological domain" description="Extracellular" evidence="4">
    <location>
        <begin position="2240"/>
        <end position="2245"/>
    </location>
</feature>
<feature type="transmembrane region" description="Helical" evidence="4">
    <location>
        <begin position="2246"/>
        <end position="2266"/>
    </location>
</feature>
<feature type="topological domain" description="Cytoplasmic" evidence="4">
    <location>
        <begin position="2267"/>
        <end position="2307"/>
    </location>
</feature>
<feature type="transmembrane region" description="Helical" evidence="4">
    <location>
        <begin position="2308"/>
        <end position="2328"/>
    </location>
</feature>
<feature type="topological domain" description="Extracellular" evidence="4">
    <location>
        <begin position="2329"/>
        <end position="2336"/>
    </location>
</feature>
<feature type="transmembrane region" description="Helical" evidence="4">
    <location>
        <begin position="2337"/>
        <end position="2357"/>
    </location>
</feature>
<feature type="topological domain" description="Cytoplasmic" evidence="4">
    <location>
        <begin position="2358"/>
        <end position="2383"/>
    </location>
</feature>
<feature type="transmembrane region" description="Helical" evidence="4">
    <location>
        <begin position="2384"/>
        <end position="2404"/>
    </location>
</feature>
<feature type="topological domain" description="Extracellular" evidence="4">
    <location>
        <begin position="2405"/>
        <end position="2520"/>
    </location>
</feature>
<feature type="transmembrane region" description="Helical" evidence="4">
    <location>
        <begin position="2521"/>
        <end position="2541"/>
    </location>
</feature>
<feature type="topological domain" description="Cytoplasmic" evidence="4">
    <location>
        <begin position="2542"/>
        <end position="2698"/>
    </location>
</feature>
<feature type="domain" description="MIR 1" evidence="5">
    <location>
        <begin position="112"/>
        <end position="166"/>
    </location>
</feature>
<feature type="domain" description="MIR 2" evidence="5">
    <location>
        <begin position="173"/>
        <end position="223"/>
    </location>
</feature>
<feature type="domain" description="MIR 3" evidence="5">
    <location>
        <begin position="230"/>
        <end position="286"/>
    </location>
</feature>
<feature type="domain" description="MIR 4" evidence="5">
    <location>
        <begin position="293"/>
        <end position="359"/>
    </location>
</feature>
<feature type="domain" description="MIR 5" evidence="5">
    <location>
        <begin position="365"/>
        <end position="421"/>
    </location>
</feature>
<feature type="region of interest" description="Disordered" evidence="6">
    <location>
        <begin position="1116"/>
        <end position="1147"/>
    </location>
</feature>
<feature type="region of interest" description="Disordered" evidence="6">
    <location>
        <begin position="2675"/>
        <end position="2698"/>
    </location>
</feature>
<feature type="compositionally biased region" description="Basic and acidic residues" evidence="6">
    <location>
        <begin position="1129"/>
        <end position="1147"/>
    </location>
</feature>
<feature type="compositionally biased region" description="Polar residues" evidence="6">
    <location>
        <begin position="2683"/>
        <end position="2692"/>
    </location>
</feature>
<feature type="binding site" evidence="1">
    <location>
        <begin position="264"/>
        <end position="268"/>
    </location>
    <ligand>
        <name>1D-myo-inositol 1,4,5-trisphosphate</name>
        <dbReference type="ChEBI" id="CHEBI:203600"/>
    </ligand>
</feature>
<feature type="binding site" evidence="1">
    <location>
        <begin position="493"/>
        <end position="496"/>
    </location>
    <ligand>
        <name>1D-myo-inositol 1,4,5-trisphosphate</name>
        <dbReference type="ChEBI" id="CHEBI:203600"/>
    </ligand>
</feature>
<feature type="binding site" evidence="1">
    <location>
        <begin position="552"/>
        <end position="554"/>
    </location>
    <ligand>
        <name>1D-myo-inositol 1,4,5-trisphosphate</name>
        <dbReference type="ChEBI" id="CHEBI:203600"/>
    </ligand>
</feature>
<keyword id="KW-0106">Calcium</keyword>
<keyword id="KW-0107">Calcium channel</keyword>
<keyword id="KW-0109">Calcium transport</keyword>
<keyword id="KW-0963">Cytoplasm</keyword>
<keyword id="KW-0217">Developmental protein</keyword>
<keyword id="KW-0256">Endoplasmic reticulum</keyword>
<keyword id="KW-0278">Fertilization</keyword>
<keyword id="KW-0407">Ion channel</keyword>
<keyword id="KW-0406">Ion transport</keyword>
<keyword id="KW-1071">Ligand-gated ion channel</keyword>
<keyword id="KW-0472">Membrane</keyword>
<keyword id="KW-0675">Receptor</keyword>
<keyword id="KW-0677">Repeat</keyword>
<keyword id="KW-0812">Transmembrane</keyword>
<keyword id="KW-1133">Transmembrane helix</keyword>
<keyword id="KW-0813">Transport</keyword>